<gene>
    <name type="primary">OR14A2</name>
    <name type="synonym">OR5AX1</name>
    <name type="synonym">OR5AX1P</name>
</gene>
<keyword id="KW-1003">Cell membrane</keyword>
<keyword id="KW-1015">Disulfide bond</keyword>
<keyword id="KW-0297">G-protein coupled receptor</keyword>
<keyword id="KW-0325">Glycoprotein</keyword>
<keyword id="KW-0472">Membrane</keyword>
<keyword id="KW-0552">Olfaction</keyword>
<keyword id="KW-0675">Receptor</keyword>
<keyword id="KW-1185">Reference proteome</keyword>
<keyword id="KW-0716">Sensory transduction</keyword>
<keyword id="KW-0807">Transducer</keyword>
<keyword id="KW-0812">Transmembrane</keyword>
<keyword id="KW-1133">Transmembrane helix</keyword>
<dbReference type="EMBL" id="AB065620">
    <property type="status" value="NOT_ANNOTATED_CDS"/>
    <property type="molecule type" value="Genomic_DNA"/>
</dbReference>
<dbReference type="EMBL" id="AF399589">
    <property type="protein sequence ID" value="AAK95074.1"/>
    <property type="molecule type" value="Genomic_DNA"/>
</dbReference>
<dbReference type="EMBL" id="BK004620">
    <property type="status" value="NOT_ANNOTATED_CDS"/>
    <property type="molecule type" value="Genomic_DNA"/>
</dbReference>
<dbReference type="CCDS" id="CCDS86063.1"/>
<dbReference type="RefSeq" id="NP_001342221.1">
    <property type="nucleotide sequence ID" value="NM_001355292.3"/>
</dbReference>
<dbReference type="RefSeq" id="XP_047276149.1">
    <property type="nucleotide sequence ID" value="XM_047420193.1"/>
</dbReference>
<dbReference type="RefSeq" id="XP_054192508.1">
    <property type="nucleotide sequence ID" value="XM_054336533.1"/>
</dbReference>
<dbReference type="SMR" id="Q96R54"/>
<dbReference type="FunCoup" id="Q96R54">
    <property type="interactions" value="40"/>
</dbReference>
<dbReference type="STRING" id="9606.ENSP00000355441"/>
<dbReference type="GlyCosmos" id="Q96R54">
    <property type="glycosylation" value="2 sites, No reported glycans"/>
</dbReference>
<dbReference type="GlyGen" id="Q96R54">
    <property type="glycosylation" value="2 sites"/>
</dbReference>
<dbReference type="BioMuta" id="OR14A2"/>
<dbReference type="DMDM" id="206558302"/>
<dbReference type="MassIVE" id="Q96R54"/>
<dbReference type="PaxDb" id="9606-ENSP00000355441"/>
<dbReference type="Antibodypedia" id="65607">
    <property type="antibodies" value="2 antibodies from 2 providers"/>
</dbReference>
<dbReference type="Ensembl" id="ENST00000366485.2">
    <property type="protein sequence ID" value="ENSP00000355441.1"/>
    <property type="gene ID" value="ENSG00000241128.3"/>
</dbReference>
<dbReference type="GeneID" id="388761"/>
<dbReference type="MANE-Select" id="ENST00000366485.2">
    <property type="protein sequence ID" value="ENSP00000355441.1"/>
    <property type="RefSeq nucleotide sequence ID" value="NM_001355292.3"/>
    <property type="RefSeq protein sequence ID" value="NP_001342221.1"/>
</dbReference>
<dbReference type="UCSC" id="uc057rau.1">
    <property type="organism name" value="human"/>
</dbReference>
<dbReference type="AGR" id="HGNC:15024"/>
<dbReference type="GeneCards" id="OR14A2"/>
<dbReference type="HGNC" id="HGNC:15024">
    <property type="gene designation" value="OR14A2"/>
</dbReference>
<dbReference type="HPA" id="ENSG00000241128">
    <property type="expression patterns" value="Tissue enriched (testis)"/>
</dbReference>
<dbReference type="neXtProt" id="NX_Q96R54"/>
<dbReference type="VEuPathDB" id="HostDB:ENSG00000241128"/>
<dbReference type="eggNOG" id="ENOG502SHXQ">
    <property type="taxonomic scope" value="Eukaryota"/>
</dbReference>
<dbReference type="GeneTree" id="ENSGT01050000244828"/>
<dbReference type="HOGENOM" id="CLU_012526_0_1_1"/>
<dbReference type="InParanoid" id="Q96R54"/>
<dbReference type="OMA" id="AYFVYLK"/>
<dbReference type="OrthoDB" id="6151005at2759"/>
<dbReference type="PAN-GO" id="Q96R54">
    <property type="GO annotations" value="2 GO annotations based on evolutionary models"/>
</dbReference>
<dbReference type="PhylomeDB" id="Q96R54"/>
<dbReference type="TreeFam" id="TF352740"/>
<dbReference type="PathwayCommons" id="Q96R54"/>
<dbReference type="Reactome" id="R-HSA-381753">
    <property type="pathway name" value="Olfactory Signaling Pathway"/>
</dbReference>
<dbReference type="Reactome" id="R-HSA-9752946">
    <property type="pathway name" value="Expression and translocation of olfactory receptors"/>
</dbReference>
<dbReference type="SignaLink" id="Q96R54"/>
<dbReference type="Pharos" id="Q96R54">
    <property type="development level" value="Tdark"/>
</dbReference>
<dbReference type="PRO" id="PR:Q96R54"/>
<dbReference type="Proteomes" id="UP000005640">
    <property type="component" value="Chromosome 1"/>
</dbReference>
<dbReference type="RNAct" id="Q96R54">
    <property type="molecule type" value="protein"/>
</dbReference>
<dbReference type="Bgee" id="ENSG00000241128">
    <property type="expression patterns" value="Expressed in male germ line stem cell (sensu Vertebrata) in testis and 4 other cell types or tissues"/>
</dbReference>
<dbReference type="ExpressionAtlas" id="Q96R54">
    <property type="expression patterns" value="baseline and differential"/>
</dbReference>
<dbReference type="GO" id="GO:0005886">
    <property type="term" value="C:plasma membrane"/>
    <property type="evidence" value="ECO:0000304"/>
    <property type="project" value="Reactome"/>
</dbReference>
<dbReference type="GO" id="GO:0004930">
    <property type="term" value="F:G protein-coupled receptor activity"/>
    <property type="evidence" value="ECO:0007669"/>
    <property type="project" value="UniProtKB-KW"/>
</dbReference>
<dbReference type="GO" id="GO:0005549">
    <property type="term" value="F:odorant binding"/>
    <property type="evidence" value="ECO:0000318"/>
    <property type="project" value="GO_Central"/>
</dbReference>
<dbReference type="GO" id="GO:0004984">
    <property type="term" value="F:olfactory receptor activity"/>
    <property type="evidence" value="ECO:0000318"/>
    <property type="project" value="GO_Central"/>
</dbReference>
<dbReference type="CDD" id="cd15227">
    <property type="entry name" value="7tmA_OR14-like"/>
    <property type="match status" value="1"/>
</dbReference>
<dbReference type="FunFam" id="1.20.1070.10:FF:000037">
    <property type="entry name" value="Olfactory receptor"/>
    <property type="match status" value="1"/>
</dbReference>
<dbReference type="Gene3D" id="1.20.1070.10">
    <property type="entry name" value="Rhodopsin 7-helix transmembrane proteins"/>
    <property type="match status" value="1"/>
</dbReference>
<dbReference type="InterPro" id="IPR000276">
    <property type="entry name" value="GPCR_Rhodpsn"/>
</dbReference>
<dbReference type="InterPro" id="IPR017452">
    <property type="entry name" value="GPCR_Rhodpsn_7TM"/>
</dbReference>
<dbReference type="InterPro" id="IPR000725">
    <property type="entry name" value="Olfact_rcpt"/>
</dbReference>
<dbReference type="InterPro" id="IPR050516">
    <property type="entry name" value="Olfactory_GPCR"/>
</dbReference>
<dbReference type="PANTHER" id="PTHR26452">
    <property type="entry name" value="OLFACTORY RECEPTOR"/>
    <property type="match status" value="1"/>
</dbReference>
<dbReference type="Pfam" id="PF13853">
    <property type="entry name" value="7tm_4"/>
    <property type="match status" value="1"/>
</dbReference>
<dbReference type="PRINTS" id="PR00237">
    <property type="entry name" value="GPCRRHODOPSN"/>
</dbReference>
<dbReference type="PRINTS" id="PR00245">
    <property type="entry name" value="OLFACTORYR"/>
</dbReference>
<dbReference type="SUPFAM" id="SSF81321">
    <property type="entry name" value="Family A G protein-coupled receptor-like"/>
    <property type="match status" value="1"/>
</dbReference>
<dbReference type="PROSITE" id="PS00237">
    <property type="entry name" value="G_PROTEIN_RECEP_F1_1"/>
    <property type="match status" value="1"/>
</dbReference>
<dbReference type="PROSITE" id="PS50262">
    <property type="entry name" value="G_PROTEIN_RECEP_F1_2"/>
    <property type="match status" value="1"/>
</dbReference>
<reference key="1">
    <citation type="submission" date="2001-07" db="EMBL/GenBank/DDBJ databases">
        <title>Genome-wide discovery and analysis of human seven transmembrane helix receptor genes.</title>
        <authorList>
            <person name="Suwa M."/>
            <person name="Sato T."/>
            <person name="Okouchi I."/>
            <person name="Arita M."/>
            <person name="Futami K."/>
            <person name="Matsumoto S."/>
            <person name="Tsutsumi S."/>
            <person name="Aburatani H."/>
            <person name="Asai K."/>
            <person name="Akiyama Y."/>
        </authorList>
    </citation>
    <scope>NUCLEOTIDE SEQUENCE [GENOMIC DNA]</scope>
</reference>
<reference key="2">
    <citation type="journal article" date="2002" name="Genomics">
        <title>DEFOG: a practical scheme for deciphering families of genes.</title>
        <authorList>
            <person name="Fuchs T."/>
            <person name="Malecova B."/>
            <person name="Linhart C."/>
            <person name="Sharan R."/>
            <person name="Khen M."/>
            <person name="Herwig R."/>
            <person name="Shmulevich D."/>
            <person name="Elkon R."/>
            <person name="Steinfath M."/>
            <person name="O'Brien J.K."/>
            <person name="Radelof U."/>
            <person name="Lehrach H."/>
            <person name="Lancet D."/>
            <person name="Shamir R."/>
        </authorList>
    </citation>
    <scope>NUCLEOTIDE SEQUENCE [GENOMIC DNA] OF 66-282</scope>
</reference>
<reference key="3">
    <citation type="journal article" date="2004" name="Proc. Natl. Acad. Sci. U.S.A.">
        <title>The human olfactory receptor gene family.</title>
        <authorList>
            <person name="Malnic B."/>
            <person name="Godfrey P.A."/>
            <person name="Buck L.B."/>
        </authorList>
    </citation>
    <scope>IDENTIFICATION</scope>
</reference>
<reference key="4">
    <citation type="journal article" date="2004" name="Proc. Natl. Acad. Sci. U.S.A.">
        <authorList>
            <person name="Malnic B."/>
            <person name="Godfrey P.A."/>
            <person name="Buck L.B."/>
        </authorList>
    </citation>
    <scope>ERRATUM OF PUBMED:14983052</scope>
</reference>
<sequence length="314" mass="34780">MANVTLVTGFLLMGFSNIQKLRILYGVLFLLIYLAALMSNLLIITLITLDVKLQTPMYFFLKNLSFLDVFLVSVPIPKFIVNNLTHNNSISILGCAFQLLLMTSFSAGEIFILTAMSYDRYVAICCPLNYEVIMNTGVCVLMASVSWAIGGLFGTAYTAGTFSMPFCGSSVIPQFFCDVPSLLRISCSETLMVIYAGIGVGACLSISCFICIVISYIYIFSTVLKIPTTKGQSKAFSTCFPHLTVFTVFIITAYFVYLKPPSNSPSVIDRLLSVIYTVMPPVFNPVTYSLRNNDMKCALIRLLQKTYGQEAYFI</sequence>
<accession>Q96R54</accession>
<name>O14A2_HUMAN</name>
<protein>
    <recommendedName>
        <fullName>Olfactory receptor 14A2</fullName>
    </recommendedName>
    <alternativeName>
        <fullName>Olfactory receptor 5AX1</fullName>
    </alternativeName>
    <alternativeName>
        <fullName>Olfactory receptor OR1-31</fullName>
    </alternativeName>
</protein>
<feature type="chain" id="PRO_0000344440" description="Olfactory receptor 14A2">
    <location>
        <begin position="1"/>
        <end position="314"/>
    </location>
</feature>
<feature type="topological domain" description="Extracellular" evidence="1">
    <location>
        <begin position="1"/>
        <end position="26"/>
    </location>
</feature>
<feature type="transmembrane region" description="Helical; Name=1" evidence="1">
    <location>
        <begin position="27"/>
        <end position="47"/>
    </location>
</feature>
<feature type="topological domain" description="Cytoplasmic" evidence="1">
    <location>
        <begin position="48"/>
        <end position="55"/>
    </location>
</feature>
<feature type="transmembrane region" description="Helical; Name=2" evidence="1">
    <location>
        <begin position="56"/>
        <end position="76"/>
    </location>
</feature>
<feature type="topological domain" description="Extracellular" evidence="1">
    <location>
        <begin position="77"/>
        <end position="91"/>
    </location>
</feature>
<feature type="transmembrane region" description="Helical; Name=3" evidence="1">
    <location>
        <begin position="92"/>
        <end position="112"/>
    </location>
</feature>
<feature type="topological domain" description="Cytoplasmic" evidence="1">
    <location>
        <begin position="113"/>
        <end position="136"/>
    </location>
</feature>
<feature type="transmembrane region" description="Helical; Name=4" evidence="1">
    <location>
        <begin position="137"/>
        <end position="157"/>
    </location>
</feature>
<feature type="topological domain" description="Extracellular" evidence="1">
    <location>
        <begin position="158"/>
        <end position="193"/>
    </location>
</feature>
<feature type="transmembrane region" description="Helical; Name=5" evidence="1">
    <location>
        <begin position="194"/>
        <end position="214"/>
    </location>
</feature>
<feature type="topological domain" description="Cytoplasmic" evidence="1">
    <location>
        <begin position="215"/>
        <end position="237"/>
    </location>
</feature>
<feature type="transmembrane region" description="Helical; Name=6" evidence="1">
    <location>
        <begin position="238"/>
        <end position="258"/>
    </location>
</feature>
<feature type="topological domain" description="Extracellular" evidence="1">
    <location>
        <begin position="259"/>
        <end position="267"/>
    </location>
</feature>
<feature type="transmembrane region" description="Helical; Name=7" evidence="1">
    <location>
        <begin position="268"/>
        <end position="290"/>
    </location>
</feature>
<feature type="topological domain" description="Cytoplasmic" evidence="1">
    <location>
        <begin position="291"/>
        <end position="314"/>
    </location>
</feature>
<feature type="glycosylation site" description="N-linked (GlcNAc...) asparagine" evidence="1">
    <location>
        <position position="3"/>
    </location>
</feature>
<feature type="glycosylation site" description="N-linked (GlcNAc...) asparagine" evidence="1">
    <location>
        <position position="83"/>
    </location>
</feature>
<feature type="disulfide bond" evidence="2">
    <location>
        <begin position="95"/>
        <end position="177"/>
    </location>
</feature>
<proteinExistence type="inferred from homology"/>
<evidence type="ECO:0000255" key="1"/>
<evidence type="ECO:0000255" key="2">
    <source>
        <dbReference type="PROSITE-ProRule" id="PRU00521"/>
    </source>
</evidence>
<evidence type="ECO:0000305" key="3"/>
<comment type="function">
    <text evidence="3">Odorant receptor.</text>
</comment>
<comment type="subcellular location">
    <subcellularLocation>
        <location>Cell membrane</location>
        <topology>Multi-pass membrane protein</topology>
    </subcellularLocation>
</comment>
<comment type="similarity">
    <text evidence="2">Belongs to the G-protein coupled receptor 1 family.</text>
</comment>
<comment type="online information" name="Human Olfactory Receptor Data Exploratorium (HORDE)">
    <link uri="http://genome.weizmann.ac.il/horde/card/index/symbol:OR14A2"/>
</comment>
<organism>
    <name type="scientific">Homo sapiens</name>
    <name type="common">Human</name>
    <dbReference type="NCBI Taxonomy" id="9606"/>
    <lineage>
        <taxon>Eukaryota</taxon>
        <taxon>Metazoa</taxon>
        <taxon>Chordata</taxon>
        <taxon>Craniata</taxon>
        <taxon>Vertebrata</taxon>
        <taxon>Euteleostomi</taxon>
        <taxon>Mammalia</taxon>
        <taxon>Eutheria</taxon>
        <taxon>Euarchontoglires</taxon>
        <taxon>Primates</taxon>
        <taxon>Haplorrhini</taxon>
        <taxon>Catarrhini</taxon>
        <taxon>Hominidae</taxon>
        <taxon>Homo</taxon>
    </lineage>
</organism>